<reference key="1">
    <citation type="journal article" date="1991" name="J. Bacteriol.">
        <title>The malX malY operon of Escherichia coli encodes a novel enzyme II of the phosphotransferase system recognizing glucose and maltose and an enzyme abolishing the endogenous induction of the maltose system.</title>
        <authorList>
            <person name="Reidl J."/>
            <person name="Boos W."/>
        </authorList>
    </citation>
    <scope>NUCLEOTIDE SEQUENCE [GENOMIC DNA]</scope>
    <source>
        <strain>K12</strain>
    </source>
</reference>
<reference key="2">
    <citation type="journal article" date="1996" name="DNA Res.">
        <title>A 570-kb DNA sequence of the Escherichia coli K-12 genome corresponding to the 28.0-40.1 min region on the linkage map.</title>
        <authorList>
            <person name="Aiba H."/>
            <person name="Baba T."/>
            <person name="Fujita K."/>
            <person name="Hayashi K."/>
            <person name="Inada T."/>
            <person name="Isono K."/>
            <person name="Itoh T."/>
            <person name="Kasai H."/>
            <person name="Kashimoto K."/>
            <person name="Kimura S."/>
            <person name="Kitakawa M."/>
            <person name="Kitagawa M."/>
            <person name="Makino K."/>
            <person name="Miki T."/>
            <person name="Mizobuchi K."/>
            <person name="Mori H."/>
            <person name="Mori T."/>
            <person name="Motomura K."/>
            <person name="Nakade S."/>
            <person name="Nakamura Y."/>
            <person name="Nashimoto H."/>
            <person name="Nishio Y."/>
            <person name="Oshima T."/>
            <person name="Saito N."/>
            <person name="Sampei G."/>
            <person name="Seki Y."/>
            <person name="Sivasundaram S."/>
            <person name="Tagami H."/>
            <person name="Takeda J."/>
            <person name="Takemoto K."/>
            <person name="Takeuchi Y."/>
            <person name="Wada C."/>
            <person name="Yamamoto Y."/>
            <person name="Horiuchi T."/>
        </authorList>
    </citation>
    <scope>NUCLEOTIDE SEQUENCE [LARGE SCALE GENOMIC DNA]</scope>
    <source>
        <strain>K12 / W3110 / ATCC 27325 / DSM 5911</strain>
    </source>
</reference>
<reference key="3">
    <citation type="journal article" date="1997" name="Science">
        <title>The complete genome sequence of Escherichia coli K-12.</title>
        <authorList>
            <person name="Blattner F.R."/>
            <person name="Plunkett G. III"/>
            <person name="Bloch C.A."/>
            <person name="Perna N.T."/>
            <person name="Burland V."/>
            <person name="Riley M."/>
            <person name="Collado-Vides J."/>
            <person name="Glasner J.D."/>
            <person name="Rode C.K."/>
            <person name="Mayhew G.F."/>
            <person name="Gregor J."/>
            <person name="Davis N.W."/>
            <person name="Kirkpatrick H.A."/>
            <person name="Goeden M.A."/>
            <person name="Rose D.J."/>
            <person name="Mau B."/>
            <person name="Shao Y."/>
        </authorList>
    </citation>
    <scope>NUCLEOTIDE SEQUENCE [LARGE SCALE GENOMIC DNA]</scope>
    <source>
        <strain>K12 / MG1655 / ATCC 47076</strain>
    </source>
</reference>
<reference key="4">
    <citation type="journal article" date="2006" name="Mol. Syst. Biol.">
        <title>Highly accurate genome sequences of Escherichia coli K-12 strains MG1655 and W3110.</title>
        <authorList>
            <person name="Hayashi K."/>
            <person name="Morooka N."/>
            <person name="Yamamoto Y."/>
            <person name="Fujita K."/>
            <person name="Isono K."/>
            <person name="Choi S."/>
            <person name="Ohtsubo E."/>
            <person name="Baba T."/>
            <person name="Wanner B.L."/>
            <person name="Mori H."/>
            <person name="Horiuchi T."/>
        </authorList>
    </citation>
    <scope>NUCLEOTIDE SEQUENCE [LARGE SCALE GENOMIC DNA]</scope>
    <source>
        <strain>K12 / W3110 / ATCC 27325 / DSM 5911</strain>
    </source>
</reference>
<reference key="5">
    <citation type="journal article" date="1995" name="J. Bacteriol.">
        <title>MalY of Escherichia coli is an enzyme with the activity of a beta C-S lyase (cystathionase).</title>
        <authorList>
            <person name="Zdych E."/>
            <person name="Peist R."/>
            <person name="Reidl J."/>
            <person name="Boos W."/>
        </authorList>
    </citation>
    <scope>CATALYTIC ACTIVITY</scope>
    <scope>PYRIDOXAL PHOSPHATE AT LYS-233</scope>
    <scope>MUTAGENESIS OF LYS-233</scope>
</reference>
<reference key="6">
    <citation type="journal article" date="2000" name="EMBO J.">
        <title>X-ray structure of MalY from Escherichia coli: a pyridoxal 5'-phosphate-dependent enzyme acting as a modulator in mal gene expression.</title>
        <authorList>
            <person name="Clausen T."/>
            <person name="Schlegel A."/>
            <person name="Peist R."/>
            <person name="Schneider E."/>
            <person name="Steegborn C."/>
            <person name="Chang Y.S."/>
            <person name="Haase A."/>
            <person name="Bourenkov G.P."/>
            <person name="Bartunik H.D."/>
            <person name="Boos W."/>
        </authorList>
    </citation>
    <scope>X-RAY CRYSTALLOGRAPHY (2.5 ANGSTROMS) OF WILD TYPE AND MUTANT VAL-221 IN COMPLEX WITH PYRIDOXAL PHOSPHATE</scope>
    <scope>SUBUNIT</scope>
    <scope>PYRIDOXAL PHOSPHATE AT LYS-233</scope>
</reference>
<name>MALY_ECOLI</name>
<sequence>MFDFSKVVDRHGTWCTQWDYVADRFGTADLLPFTISDMDFATAPCIIEALNQRLMHGVFGYSRWKNDEFLAAIAHWFSTQHYTAIDSQTVVYGPSVIYMVSELIRQWSETGEGVVIHTPAYDAFYKAIEGNQRTVMPVALEKQADGWFCDMGKLEAVLAKPECKIMLLCSPQNPTGKVWTCDELEIMADLCERHGVRVISDEIHMDMVWGEQPHIPWSNVARGDWALLTSGSKSFNIPALTGAYGIIENSSSRDAYLSALKGRDGLSSPSVLALTAHIAAYQQGAPWLDALRIYLKDNLTYIADKMNAAFPELNWQIPQSTYLAWLDLRPLNIDDNALQKALIEQEKVAIMPGYTYGEEGRGFVRLNAGCPRSKLEKGVAGLINAIRAVR</sequence>
<evidence type="ECO:0000269" key="1">
    <source>
    </source>
</evidence>
<evidence type="ECO:0000269" key="2">
    <source>
    </source>
</evidence>
<evidence type="ECO:0000305" key="3"/>
<evidence type="ECO:0007829" key="4">
    <source>
        <dbReference type="PDB" id="1D2F"/>
    </source>
</evidence>
<evidence type="ECO:0007829" key="5">
    <source>
        <dbReference type="PDB" id="8BOB"/>
    </source>
</evidence>
<protein>
    <recommendedName>
        <fullName>Protein MalY</fullName>
    </recommendedName>
    <domain>
        <recommendedName>
            <fullName>Cystathionine beta-lyase MalY</fullName>
            <shortName>CBL</shortName>
            <ecNumber evidence="2">4.4.1.13</ecNumber>
        </recommendedName>
        <alternativeName>
            <fullName>Beta-cystathionase MalY</fullName>
        </alternativeName>
        <alternativeName>
            <fullName>Cysteine lyase MalY</fullName>
        </alternativeName>
        <alternativeName>
            <fullName>Cysteine-S-conjugate beta-lyase MalY</fullName>
        </alternativeName>
    </domain>
    <domain>
        <recommendedName>
            <fullName>Maltose regulon modulator</fullName>
        </recommendedName>
    </domain>
</protein>
<keyword id="KW-0002">3D-structure</keyword>
<keyword id="KW-0028">Amino-acid biosynthesis</keyword>
<keyword id="KW-0456">Lyase</keyword>
<keyword id="KW-0486">Methionine biosynthesis</keyword>
<keyword id="KW-0663">Pyridoxal phosphate</keyword>
<keyword id="KW-1185">Reference proteome</keyword>
<keyword id="KW-0678">Repressor</keyword>
<keyword id="KW-0804">Transcription</keyword>
<keyword id="KW-0805">Transcription regulation</keyword>
<gene>
    <name type="primary">malY</name>
    <name type="ordered locus">b1622</name>
    <name type="ordered locus">JW1614</name>
</gene>
<accession>P23256</accession>
<organism>
    <name type="scientific">Escherichia coli (strain K12)</name>
    <dbReference type="NCBI Taxonomy" id="83333"/>
    <lineage>
        <taxon>Bacteria</taxon>
        <taxon>Pseudomonadati</taxon>
        <taxon>Pseudomonadota</taxon>
        <taxon>Gammaproteobacteria</taxon>
        <taxon>Enterobacterales</taxon>
        <taxon>Enterobacteriaceae</taxon>
        <taxon>Escherichia</taxon>
    </lineage>
</organism>
<proteinExistence type="evidence at protein level"/>
<feature type="chain" id="PRO_0000163847" description="Protein MalY">
    <location>
        <begin position="1"/>
        <end position="390"/>
    </location>
</feature>
<feature type="modified residue" description="N6-(pyridoxal phosphate)lysine" evidence="1 2">
    <location>
        <position position="233"/>
    </location>
</feature>
<feature type="mutagenesis site" description="Loss of enzymatic activity; but no loss of repression function." evidence="2">
    <original>K</original>
    <variation>I</variation>
    <location>
        <position position="233"/>
    </location>
</feature>
<feature type="turn" evidence="5">
    <location>
        <begin position="16"/>
        <end position="18"/>
    </location>
</feature>
<feature type="turn" evidence="5">
    <location>
        <begin position="22"/>
        <end position="24"/>
    </location>
</feature>
<feature type="strand" evidence="5">
    <location>
        <begin position="26"/>
        <end position="28"/>
    </location>
</feature>
<feature type="strand" evidence="5">
    <location>
        <begin position="30"/>
        <end position="32"/>
    </location>
</feature>
<feature type="strand" evidence="4">
    <location>
        <begin position="35"/>
        <end position="37"/>
    </location>
</feature>
<feature type="helix" evidence="4">
    <location>
        <begin position="44"/>
        <end position="54"/>
    </location>
</feature>
<feature type="helix" evidence="4">
    <location>
        <begin position="67"/>
        <end position="80"/>
    </location>
</feature>
<feature type="helix" evidence="4">
    <location>
        <begin position="87"/>
        <end position="89"/>
    </location>
</feature>
<feature type="strand" evidence="4">
    <location>
        <begin position="90"/>
        <end position="94"/>
    </location>
</feature>
<feature type="helix" evidence="4">
    <location>
        <begin position="96"/>
        <end position="106"/>
    </location>
</feature>
<feature type="strand" evidence="4">
    <location>
        <begin position="113"/>
        <end position="119"/>
    </location>
</feature>
<feature type="helix" evidence="4">
    <location>
        <begin position="122"/>
        <end position="130"/>
    </location>
</feature>
<feature type="strand" evidence="4">
    <location>
        <begin position="134"/>
        <end position="139"/>
    </location>
</feature>
<feature type="strand" evidence="4">
    <location>
        <begin position="144"/>
        <end position="148"/>
    </location>
</feature>
<feature type="helix" evidence="4">
    <location>
        <begin position="151"/>
        <end position="158"/>
    </location>
</feature>
<feature type="strand" evidence="4">
    <location>
        <begin position="163"/>
        <end position="171"/>
    </location>
</feature>
<feature type="turn" evidence="4">
    <location>
        <begin position="173"/>
        <end position="175"/>
    </location>
</feature>
<feature type="helix" evidence="4">
    <location>
        <begin position="183"/>
        <end position="193"/>
    </location>
</feature>
<feature type="strand" evidence="4">
    <location>
        <begin position="197"/>
        <end position="201"/>
    </location>
</feature>
<feature type="turn" evidence="4">
    <location>
        <begin position="203"/>
        <end position="206"/>
    </location>
</feature>
<feature type="strand" evidence="4">
    <location>
        <begin position="210"/>
        <end position="212"/>
    </location>
</feature>
<feature type="helix" evidence="4">
    <location>
        <begin position="217"/>
        <end position="219"/>
    </location>
</feature>
<feature type="strand" evidence="4">
    <location>
        <begin position="223"/>
        <end position="229"/>
    </location>
</feature>
<feature type="helix" evidence="4">
    <location>
        <begin position="232"/>
        <end position="235"/>
    </location>
</feature>
<feature type="helix" evidence="4">
    <location>
        <begin position="238"/>
        <end position="240"/>
    </location>
</feature>
<feature type="strand" evidence="4">
    <location>
        <begin position="243"/>
        <end position="247"/>
    </location>
</feature>
<feature type="helix" evidence="4">
    <location>
        <begin position="250"/>
        <end position="261"/>
    </location>
</feature>
<feature type="helix" evidence="4">
    <location>
        <begin position="271"/>
        <end position="283"/>
    </location>
</feature>
<feature type="helix" evidence="4">
    <location>
        <begin position="285"/>
        <end position="309"/>
    </location>
</feature>
<feature type="strand" evidence="4">
    <location>
        <begin position="322"/>
        <end position="327"/>
    </location>
</feature>
<feature type="helix" evidence="4">
    <location>
        <begin position="329"/>
        <end position="331"/>
    </location>
</feature>
<feature type="helix" evidence="4">
    <location>
        <begin position="335"/>
        <end position="344"/>
    </location>
</feature>
<feature type="helix" evidence="4">
    <location>
        <begin position="353"/>
        <end position="356"/>
    </location>
</feature>
<feature type="helix" evidence="4">
    <location>
        <begin position="358"/>
        <end position="360"/>
    </location>
</feature>
<feature type="strand" evidence="4">
    <location>
        <begin position="363"/>
        <end position="367"/>
    </location>
</feature>
<feature type="helix" evidence="4">
    <location>
        <begin position="372"/>
        <end position="389"/>
    </location>
</feature>
<dbReference type="EC" id="4.4.1.13" evidence="2"/>
<dbReference type="EMBL" id="M60722">
    <property type="protein sequence ID" value="AAA24099.1"/>
    <property type="molecule type" value="mRNA"/>
</dbReference>
<dbReference type="EMBL" id="U00096">
    <property type="protein sequence ID" value="AAC74694.1"/>
    <property type="molecule type" value="Genomic_DNA"/>
</dbReference>
<dbReference type="EMBL" id="AP009048">
    <property type="protein sequence ID" value="BAA15373.1"/>
    <property type="molecule type" value="Genomic_DNA"/>
</dbReference>
<dbReference type="PIR" id="C42477">
    <property type="entry name" value="C42477"/>
</dbReference>
<dbReference type="RefSeq" id="NP_416139.1">
    <property type="nucleotide sequence ID" value="NC_000913.3"/>
</dbReference>
<dbReference type="RefSeq" id="WP_000459379.1">
    <property type="nucleotide sequence ID" value="NZ_SSZK01000001.1"/>
</dbReference>
<dbReference type="PDB" id="1D2F">
    <property type="method" value="X-ray"/>
    <property type="resolution" value="2.50 A"/>
    <property type="chains" value="A/B=1-390"/>
</dbReference>
<dbReference type="PDB" id="8BOB">
    <property type="method" value="EM"/>
    <property type="resolution" value="2.94 A"/>
    <property type="chains" value="A/B=1-390"/>
</dbReference>
<dbReference type="PDBsum" id="1D2F"/>
<dbReference type="PDBsum" id="8BOB"/>
<dbReference type="EMDB" id="EMD-16140"/>
<dbReference type="SMR" id="P23256"/>
<dbReference type="BioGRID" id="4261731">
    <property type="interactions" value="20"/>
</dbReference>
<dbReference type="ComplexPortal" id="CPX-8282">
    <property type="entry name" value="MalT-MalY transcriptional regulator complex"/>
</dbReference>
<dbReference type="DIP" id="DIP-10151N"/>
<dbReference type="FunCoup" id="P23256">
    <property type="interactions" value="325"/>
</dbReference>
<dbReference type="IntAct" id="P23256">
    <property type="interactions" value="11"/>
</dbReference>
<dbReference type="STRING" id="511145.b1622"/>
<dbReference type="MoonProt" id="P23256"/>
<dbReference type="jPOST" id="P23256"/>
<dbReference type="PaxDb" id="511145-b1622"/>
<dbReference type="EnsemblBacteria" id="AAC74694">
    <property type="protein sequence ID" value="AAC74694"/>
    <property type="gene ID" value="b1622"/>
</dbReference>
<dbReference type="GeneID" id="945937"/>
<dbReference type="KEGG" id="ecj:JW1614"/>
<dbReference type="KEGG" id="eco:b1622"/>
<dbReference type="KEGG" id="ecoc:C3026_09325"/>
<dbReference type="PATRIC" id="fig|1411691.4.peg.639"/>
<dbReference type="EchoBASE" id="EB0559"/>
<dbReference type="eggNOG" id="COG1168">
    <property type="taxonomic scope" value="Bacteria"/>
</dbReference>
<dbReference type="HOGENOM" id="CLU_017584_15_0_6"/>
<dbReference type="InParanoid" id="P23256"/>
<dbReference type="OMA" id="HIRINIG"/>
<dbReference type="OrthoDB" id="3224382at2"/>
<dbReference type="PhylomeDB" id="P23256"/>
<dbReference type="BioCyc" id="EcoCyc:EG10564-MONOMER"/>
<dbReference type="BioCyc" id="MetaCyc:EG10564-MONOMER"/>
<dbReference type="SABIO-RK" id="P23256"/>
<dbReference type="EvolutionaryTrace" id="P23256"/>
<dbReference type="PRO" id="PR:P23256"/>
<dbReference type="Proteomes" id="UP000000625">
    <property type="component" value="Chromosome"/>
</dbReference>
<dbReference type="GO" id="GO:0047804">
    <property type="term" value="F:cysteine-S-conjugate beta-lyase activity"/>
    <property type="evidence" value="ECO:0000314"/>
    <property type="project" value="EcoCyc"/>
</dbReference>
<dbReference type="GO" id="GO:0140297">
    <property type="term" value="F:DNA-binding transcription factor binding"/>
    <property type="evidence" value="ECO:0000353"/>
    <property type="project" value="EcoCyc"/>
</dbReference>
<dbReference type="GO" id="GO:0080146">
    <property type="term" value="F:L-cysteine desulfhydrase activity"/>
    <property type="evidence" value="ECO:0000315"/>
    <property type="project" value="EcoCyc"/>
</dbReference>
<dbReference type="GO" id="GO:0042803">
    <property type="term" value="F:protein homodimerization activity"/>
    <property type="evidence" value="ECO:0000314"/>
    <property type="project" value="EcoCyc"/>
</dbReference>
<dbReference type="GO" id="GO:0030170">
    <property type="term" value="F:pyridoxal phosphate binding"/>
    <property type="evidence" value="ECO:0000314"/>
    <property type="project" value="EcoCyc"/>
</dbReference>
<dbReference type="GO" id="GO:0009086">
    <property type="term" value="P:methionine biosynthetic process"/>
    <property type="evidence" value="ECO:0007669"/>
    <property type="project" value="UniProtKB-KW"/>
</dbReference>
<dbReference type="CDD" id="cd00609">
    <property type="entry name" value="AAT_like"/>
    <property type="match status" value="1"/>
</dbReference>
<dbReference type="Gene3D" id="3.90.1150.10">
    <property type="entry name" value="Aspartate Aminotransferase, domain 1"/>
    <property type="match status" value="1"/>
</dbReference>
<dbReference type="Gene3D" id="3.40.640.10">
    <property type="entry name" value="Type I PLP-dependent aspartate aminotransferase-like (Major domain)"/>
    <property type="match status" value="1"/>
</dbReference>
<dbReference type="InterPro" id="IPR004839">
    <property type="entry name" value="Aminotransferase_I/II_large"/>
</dbReference>
<dbReference type="InterPro" id="IPR027619">
    <property type="entry name" value="C-S_lyase_PatB-like"/>
</dbReference>
<dbReference type="InterPro" id="IPR051798">
    <property type="entry name" value="Class-II_PLP-Dep_Aminotrans"/>
</dbReference>
<dbReference type="InterPro" id="IPR015424">
    <property type="entry name" value="PyrdxlP-dep_Trfase"/>
</dbReference>
<dbReference type="InterPro" id="IPR015421">
    <property type="entry name" value="PyrdxlP-dep_Trfase_major"/>
</dbReference>
<dbReference type="InterPro" id="IPR015422">
    <property type="entry name" value="PyrdxlP-dep_Trfase_small"/>
</dbReference>
<dbReference type="NCBIfam" id="TIGR04350">
    <property type="entry name" value="C_S_lyase_PatB"/>
    <property type="match status" value="1"/>
</dbReference>
<dbReference type="PANTHER" id="PTHR43525">
    <property type="entry name" value="PROTEIN MALY"/>
    <property type="match status" value="1"/>
</dbReference>
<dbReference type="PANTHER" id="PTHR43525:SF1">
    <property type="entry name" value="PROTEIN MALY"/>
    <property type="match status" value="1"/>
</dbReference>
<dbReference type="Pfam" id="PF00155">
    <property type="entry name" value="Aminotran_1_2"/>
    <property type="match status" value="1"/>
</dbReference>
<dbReference type="SUPFAM" id="SSF53383">
    <property type="entry name" value="PLP-dependent transferases"/>
    <property type="match status" value="1"/>
</dbReference>
<comment type="function">
    <text>Acts as a beta-cystathionase and as a repressor of the maltose regulon.</text>
</comment>
<comment type="catalytic activity">
    <reaction evidence="2">
        <text>L,L-cystathionine + H2O = L-homocysteine + pyruvate + NH4(+)</text>
        <dbReference type="Rhea" id="RHEA:13965"/>
        <dbReference type="ChEBI" id="CHEBI:15361"/>
        <dbReference type="ChEBI" id="CHEBI:15377"/>
        <dbReference type="ChEBI" id="CHEBI:28938"/>
        <dbReference type="ChEBI" id="CHEBI:58161"/>
        <dbReference type="ChEBI" id="CHEBI:58199"/>
    </reaction>
</comment>
<comment type="catalytic activity">
    <reaction evidence="2">
        <text>an S-substituted L-cysteine + H2O = a thiol + pyruvate + NH4(+)</text>
        <dbReference type="Rhea" id="RHEA:18121"/>
        <dbReference type="ChEBI" id="CHEBI:15361"/>
        <dbReference type="ChEBI" id="CHEBI:15377"/>
        <dbReference type="ChEBI" id="CHEBI:28938"/>
        <dbReference type="ChEBI" id="CHEBI:29256"/>
        <dbReference type="ChEBI" id="CHEBI:58717"/>
        <dbReference type="EC" id="4.4.1.13"/>
    </reaction>
</comment>
<comment type="cofactor">
    <cofactor evidence="1 2">
        <name>pyridoxal 5'-phosphate</name>
        <dbReference type="ChEBI" id="CHEBI:597326"/>
    </cofactor>
</comment>
<comment type="subunit">
    <text evidence="1">Homodimer. Interacts with MalT.</text>
</comment>
<comment type="interaction">
    <interactant intactId="EBI-1124666">
        <id>P23256</id>
    </interactant>
    <interactant intactId="EBI-542934">
        <id>P06993</id>
        <label>malT</label>
    </interactant>
    <organismsDiffer>false</organismsDiffer>
    <experiments>3</experiments>
</comment>
<comment type="similarity">
    <text evidence="3">Belongs to the class-II pyridoxal-phosphate-dependent aminotransferase family. MalY/PatB cystathionine beta-lyase subfamily.</text>
</comment>